<organism>
    <name type="scientific">Candida glabrata (strain ATCC 2001 / BCRC 20586 / JCM 3761 / NBRC 0622 / NRRL Y-65 / CBS 138)</name>
    <name type="common">Yeast</name>
    <name type="synonym">Nakaseomyces glabratus</name>
    <dbReference type="NCBI Taxonomy" id="284593"/>
    <lineage>
        <taxon>Eukaryota</taxon>
        <taxon>Fungi</taxon>
        <taxon>Dikarya</taxon>
        <taxon>Ascomycota</taxon>
        <taxon>Saccharomycotina</taxon>
        <taxon>Saccharomycetes</taxon>
        <taxon>Saccharomycetales</taxon>
        <taxon>Saccharomycetaceae</taxon>
        <taxon>Nakaseomyces</taxon>
    </lineage>
</organism>
<reference key="1">
    <citation type="journal article" date="2004" name="Nature">
        <title>Genome evolution in yeasts.</title>
        <authorList>
            <person name="Dujon B."/>
            <person name="Sherman D."/>
            <person name="Fischer G."/>
            <person name="Durrens P."/>
            <person name="Casaregola S."/>
            <person name="Lafontaine I."/>
            <person name="de Montigny J."/>
            <person name="Marck C."/>
            <person name="Neuveglise C."/>
            <person name="Talla E."/>
            <person name="Goffard N."/>
            <person name="Frangeul L."/>
            <person name="Aigle M."/>
            <person name="Anthouard V."/>
            <person name="Babour A."/>
            <person name="Barbe V."/>
            <person name="Barnay S."/>
            <person name="Blanchin S."/>
            <person name="Beckerich J.-M."/>
            <person name="Beyne E."/>
            <person name="Bleykasten C."/>
            <person name="Boisrame A."/>
            <person name="Boyer J."/>
            <person name="Cattolico L."/>
            <person name="Confanioleri F."/>
            <person name="de Daruvar A."/>
            <person name="Despons L."/>
            <person name="Fabre E."/>
            <person name="Fairhead C."/>
            <person name="Ferry-Dumazet H."/>
            <person name="Groppi A."/>
            <person name="Hantraye F."/>
            <person name="Hennequin C."/>
            <person name="Jauniaux N."/>
            <person name="Joyet P."/>
            <person name="Kachouri R."/>
            <person name="Kerrest A."/>
            <person name="Koszul R."/>
            <person name="Lemaire M."/>
            <person name="Lesur I."/>
            <person name="Ma L."/>
            <person name="Muller H."/>
            <person name="Nicaud J.-M."/>
            <person name="Nikolski M."/>
            <person name="Oztas S."/>
            <person name="Ozier-Kalogeropoulos O."/>
            <person name="Pellenz S."/>
            <person name="Potier S."/>
            <person name="Richard G.-F."/>
            <person name="Straub M.-L."/>
            <person name="Suleau A."/>
            <person name="Swennen D."/>
            <person name="Tekaia F."/>
            <person name="Wesolowski-Louvel M."/>
            <person name="Westhof E."/>
            <person name="Wirth B."/>
            <person name="Zeniou-Meyer M."/>
            <person name="Zivanovic Y."/>
            <person name="Bolotin-Fukuhara M."/>
            <person name="Thierry A."/>
            <person name="Bouchier C."/>
            <person name="Caudron B."/>
            <person name="Scarpelli C."/>
            <person name="Gaillardin C."/>
            <person name="Weissenbach J."/>
            <person name="Wincker P."/>
            <person name="Souciet J.-L."/>
        </authorList>
    </citation>
    <scope>NUCLEOTIDE SEQUENCE [LARGE SCALE GENOMIC DNA]</scope>
    <source>
        <strain>ATCC 2001 / BCRC 20586 / JCM 3761 / NBRC 0622 / NRRL Y-65 / CBS 138</strain>
    </source>
</reference>
<feature type="chain" id="PRO_0000080254" description="Chitobiosyldiphosphodolichol beta-mannosyltransferase">
    <location>
        <begin position="1"/>
        <end position="450"/>
    </location>
</feature>
<feature type="topological domain" description="Lumenal" evidence="1">
    <location>
        <begin position="1"/>
        <end position="13"/>
    </location>
</feature>
<feature type="transmembrane region" description="Helical" evidence="2">
    <location>
        <begin position="14"/>
        <end position="34"/>
    </location>
</feature>
<feature type="topological domain" description="Cytoplasmic" evidence="1">
    <location>
        <begin position="35"/>
        <end position="106"/>
    </location>
</feature>
<feature type="intramembrane region" description="Helical" evidence="2">
    <location>
        <begin position="107"/>
        <end position="127"/>
    </location>
</feature>
<feature type="topological domain" description="Cytoplasmic" evidence="1">
    <location>
        <begin position="128"/>
        <end position="450"/>
    </location>
</feature>
<gene>
    <name type="primary">ALG1</name>
    <name type="ordered locus">CAGL0K12342g</name>
</gene>
<keyword id="KW-0256">Endoplasmic reticulum</keyword>
<keyword id="KW-0328">Glycosyltransferase</keyword>
<keyword id="KW-0472">Membrane</keyword>
<keyword id="KW-1185">Reference proteome</keyword>
<keyword id="KW-0735">Signal-anchor</keyword>
<keyword id="KW-0808">Transferase</keyword>
<keyword id="KW-0812">Transmembrane</keyword>
<keyword id="KW-1133">Transmembrane helix</keyword>
<proteinExistence type="inferred from homology"/>
<protein>
    <recommendedName>
        <fullName evidence="1">Chitobiosyldiphosphodolichol beta-mannosyltransferase</fullName>
        <ecNumber evidence="1">2.4.1.142</ecNumber>
    </recommendedName>
    <alternativeName>
        <fullName>Asparagine-linked glycosylation protein 1</fullName>
    </alternativeName>
    <alternativeName>
        <fullName>Beta-1,4-mannosyltransferase</fullName>
    </alternativeName>
    <alternativeName>
        <fullName>GDP-Man:GlcNAc2-PP-dolichol mannosyltransferase</fullName>
    </alternativeName>
    <alternativeName>
        <fullName>GDP-mannose-dolichol diphosphochitobiose mannosyltransferase</fullName>
    </alternativeName>
</protein>
<dbReference type="EC" id="2.4.1.142" evidence="1"/>
<dbReference type="EMBL" id="CR380957">
    <property type="protein sequence ID" value="CAG61715.1"/>
    <property type="molecule type" value="Genomic_DNA"/>
</dbReference>
<dbReference type="RefSeq" id="XP_448752.1">
    <property type="nucleotide sequence ID" value="XM_448752.1"/>
</dbReference>
<dbReference type="SMR" id="Q6FLZ2"/>
<dbReference type="FunCoup" id="Q6FLZ2">
    <property type="interactions" value="962"/>
</dbReference>
<dbReference type="STRING" id="284593.Q6FLZ2"/>
<dbReference type="CAZy" id="GT33">
    <property type="family name" value="Glycosyltransferase Family 33"/>
</dbReference>
<dbReference type="GlyCosmos" id="Q6FLZ2">
    <property type="glycosylation" value="3 sites, No reported glycans"/>
</dbReference>
<dbReference type="EnsemblFungi" id="CAGL0K12342g-T">
    <property type="protein sequence ID" value="CAGL0K12342g-T-p1"/>
    <property type="gene ID" value="CAGL0K12342g"/>
</dbReference>
<dbReference type="KEGG" id="cgr:2889981"/>
<dbReference type="CGD" id="CAL0134263">
    <property type="gene designation" value="CAGL0K12342g"/>
</dbReference>
<dbReference type="VEuPathDB" id="FungiDB:CAGL0K12342g"/>
<dbReference type="eggNOG" id="KOG2941">
    <property type="taxonomic scope" value="Eukaryota"/>
</dbReference>
<dbReference type="HOGENOM" id="CLU_012079_0_0_1"/>
<dbReference type="InParanoid" id="Q6FLZ2"/>
<dbReference type="OMA" id="CKLIIDW"/>
<dbReference type="UniPathway" id="UPA00378"/>
<dbReference type="Proteomes" id="UP000002428">
    <property type="component" value="Chromosome K"/>
</dbReference>
<dbReference type="GO" id="GO:0098554">
    <property type="term" value="C:cytoplasmic side of endoplasmic reticulum membrane"/>
    <property type="evidence" value="ECO:0000250"/>
    <property type="project" value="UniProtKB"/>
</dbReference>
<dbReference type="GO" id="GO:0004578">
    <property type="term" value="F:chitobiosyldiphosphodolichol beta-mannosyltransferase activity"/>
    <property type="evidence" value="ECO:0000250"/>
    <property type="project" value="UniProtKB"/>
</dbReference>
<dbReference type="GO" id="GO:0006488">
    <property type="term" value="P:dolichol-linked oligosaccharide biosynthetic process"/>
    <property type="evidence" value="ECO:0000250"/>
    <property type="project" value="UniProtKB"/>
</dbReference>
<dbReference type="FunFam" id="3.40.50.2000:FF:000216">
    <property type="entry name" value="Chitobiosyldiphosphodolichol beta-mannosyltransferase"/>
    <property type="match status" value="1"/>
</dbReference>
<dbReference type="Gene3D" id="3.40.50.2000">
    <property type="entry name" value="Glycogen Phosphorylase B"/>
    <property type="match status" value="1"/>
</dbReference>
<dbReference type="InterPro" id="IPR026051">
    <property type="entry name" value="ALG1-like"/>
</dbReference>
<dbReference type="InterPro" id="IPR001296">
    <property type="entry name" value="Glyco_trans_1"/>
</dbReference>
<dbReference type="PANTHER" id="PTHR13036">
    <property type="entry name" value="BETA1,4 MANNOSYLTRANSFERASE"/>
    <property type="match status" value="1"/>
</dbReference>
<dbReference type="PANTHER" id="PTHR13036:SF0">
    <property type="entry name" value="CHITOBIOSYLDIPHOSPHODOLICHOL BETA-MANNOSYLTRANSFERASE"/>
    <property type="match status" value="1"/>
</dbReference>
<dbReference type="Pfam" id="PF00534">
    <property type="entry name" value="Glycos_transf_1"/>
    <property type="match status" value="1"/>
</dbReference>
<dbReference type="SUPFAM" id="SSF53756">
    <property type="entry name" value="UDP-Glycosyltransferase/glycogen phosphorylase"/>
    <property type="match status" value="1"/>
</dbReference>
<name>ALG1_CANGA</name>
<sequence>MSWIQIPWSWVVTLIVTYLSLPLIIYYLVPYIFYGNKSSKKRIIIYVLGDIGHSPRMCYHARSFSEKGWQVELCGYVEEQVPGFIAEDPNIIVHALPTLTLQGNKRSIIFLVKKVLFQVSAIIAQLWELRGSNYMLIQNPPSIPILPIAVFYRLSGCKLIIDWHNLAYSIMQLKFNGNFYHPVVLASYVIEYIFGKFATYNLTVTEAMKEYLVNSFGLNPKRCVVLYDRPATQFKPLTESESRTKLLDSEFIRDMIPEGFNVEKGDKIIVTSTSFTPDEDISILIGALKIYDNSYENLDKSLPKILCFVTGKGPMKERYVKDVEEHDWQHVYVKFVWLKSEDYPRLLQLCDYGVSLHKSSSGLDLPMKILDMYGSGIPVIAYNYPVLGELVKYNENGLKFLDRRELHESLIFAMKDPELYKKLKQGALKESQIRWNSSWQSAMQELKLVA</sequence>
<evidence type="ECO:0000250" key="1">
    <source>
        <dbReference type="UniProtKB" id="P16661"/>
    </source>
</evidence>
<evidence type="ECO:0000255" key="2"/>
<evidence type="ECO:0000305" key="3"/>
<comment type="function">
    <text evidence="1">Participates in the formation of the lipid-linked precursor oligosaccharide for N-glycosylation. Involved in assembling the dolichol-pyrophosphate-GlcNAc(2)-Man(5) intermediate on the cytoplasmic surface of the ER.</text>
</comment>
<comment type="catalytic activity">
    <reaction evidence="1">
        <text>an N,N'-diacetylchitobiosyl-diphospho-di-trans,poly-cis-dolichol + GDP-alpha-D-mannose = a beta-D-Man-(1-&gt;4)-beta-D-GlcNAc-(1-&gt;4)-alpha-D-GlcNAc-diphospho-di-trans,poly-cis-dolichol + GDP + H(+)</text>
        <dbReference type="Rhea" id="RHEA:13865"/>
        <dbReference type="Rhea" id="RHEA-COMP:19510"/>
        <dbReference type="Rhea" id="RHEA-COMP:19511"/>
        <dbReference type="ChEBI" id="CHEBI:15378"/>
        <dbReference type="ChEBI" id="CHEBI:57269"/>
        <dbReference type="ChEBI" id="CHEBI:57527"/>
        <dbReference type="ChEBI" id="CHEBI:58189"/>
        <dbReference type="ChEBI" id="CHEBI:58472"/>
        <dbReference type="EC" id="2.4.1.142"/>
    </reaction>
    <physiologicalReaction direction="left-to-right" evidence="1">
        <dbReference type="Rhea" id="RHEA:13866"/>
    </physiologicalReaction>
</comment>
<comment type="pathway">
    <text evidence="1">Protein modification; protein glycosylation.</text>
</comment>
<comment type="subcellular location">
    <subcellularLocation>
        <location evidence="1">Endoplasmic reticulum membrane</location>
        <topology evidence="1">Single-pass membrane protein</topology>
    </subcellularLocation>
</comment>
<comment type="similarity">
    <text evidence="3">Belongs to the glycosyltransferase group 1 family.</text>
</comment>
<accession>Q6FLZ2</accession>